<accession>Q0ANV0</accession>
<protein>
    <recommendedName>
        <fullName evidence="1">Octanoyltransferase</fullName>
        <ecNumber evidence="1">2.3.1.181</ecNumber>
    </recommendedName>
    <alternativeName>
        <fullName evidence="1">Lipoate-protein ligase B</fullName>
    </alternativeName>
    <alternativeName>
        <fullName evidence="1">Lipoyl/octanoyl transferase</fullName>
    </alternativeName>
    <alternativeName>
        <fullName evidence="1">Octanoyl-[acyl-carrier-protein]-protein N-octanoyltransferase</fullName>
    </alternativeName>
</protein>
<comment type="function">
    <text evidence="1">Catalyzes the transfer of endogenously produced octanoic acid from octanoyl-acyl-carrier-protein onto the lipoyl domains of lipoate-dependent enzymes. Lipoyl-ACP can also act as a substrate although octanoyl-ACP is likely to be the physiological substrate.</text>
</comment>
<comment type="catalytic activity">
    <reaction evidence="1">
        <text>octanoyl-[ACP] + L-lysyl-[protein] = N(6)-octanoyl-L-lysyl-[protein] + holo-[ACP] + H(+)</text>
        <dbReference type="Rhea" id="RHEA:17665"/>
        <dbReference type="Rhea" id="RHEA-COMP:9636"/>
        <dbReference type="Rhea" id="RHEA-COMP:9685"/>
        <dbReference type="Rhea" id="RHEA-COMP:9752"/>
        <dbReference type="Rhea" id="RHEA-COMP:9928"/>
        <dbReference type="ChEBI" id="CHEBI:15378"/>
        <dbReference type="ChEBI" id="CHEBI:29969"/>
        <dbReference type="ChEBI" id="CHEBI:64479"/>
        <dbReference type="ChEBI" id="CHEBI:78463"/>
        <dbReference type="ChEBI" id="CHEBI:78809"/>
        <dbReference type="EC" id="2.3.1.181"/>
    </reaction>
</comment>
<comment type="pathway">
    <text evidence="1">Protein modification; protein lipoylation via endogenous pathway; protein N(6)-(lipoyl)lysine from octanoyl-[acyl-carrier-protein]: step 1/2.</text>
</comment>
<comment type="subcellular location">
    <subcellularLocation>
        <location evidence="1">Cytoplasm</location>
    </subcellularLocation>
</comment>
<comment type="miscellaneous">
    <text evidence="1">In the reaction, the free carboxyl group of octanoic acid is attached via an amide linkage to the epsilon-amino group of a specific lysine residue of lipoyl domains of lipoate-dependent enzymes.</text>
</comment>
<comment type="similarity">
    <text evidence="1">Belongs to the LipB family.</text>
</comment>
<keyword id="KW-0012">Acyltransferase</keyword>
<keyword id="KW-0963">Cytoplasm</keyword>
<keyword id="KW-1185">Reference proteome</keyword>
<keyword id="KW-0808">Transferase</keyword>
<evidence type="ECO:0000255" key="1">
    <source>
        <dbReference type="HAMAP-Rule" id="MF_00013"/>
    </source>
</evidence>
<evidence type="ECO:0000255" key="2">
    <source>
        <dbReference type="PROSITE-ProRule" id="PRU01067"/>
    </source>
</evidence>
<feature type="chain" id="PRO_0000321643" description="Octanoyltransferase">
    <location>
        <begin position="1"/>
        <end position="226"/>
    </location>
</feature>
<feature type="domain" description="BPL/LPL catalytic" evidence="2">
    <location>
        <begin position="34"/>
        <end position="216"/>
    </location>
</feature>
<feature type="active site" description="Acyl-thioester intermediate" evidence="1">
    <location>
        <position position="176"/>
    </location>
</feature>
<feature type="binding site" evidence="1">
    <location>
        <begin position="73"/>
        <end position="80"/>
    </location>
    <ligand>
        <name>substrate</name>
    </ligand>
</feature>
<feature type="binding site" evidence="1">
    <location>
        <begin position="145"/>
        <end position="147"/>
    </location>
    <ligand>
        <name>substrate</name>
    </ligand>
</feature>
<feature type="binding site" evidence="1">
    <location>
        <begin position="158"/>
        <end position="160"/>
    </location>
    <ligand>
        <name>substrate</name>
    </ligand>
</feature>
<feature type="site" description="Lowers pKa of active site Cys" evidence="1">
    <location>
        <position position="142"/>
    </location>
</feature>
<reference key="1">
    <citation type="submission" date="2006-08" db="EMBL/GenBank/DDBJ databases">
        <title>Complete sequence of Maricaulis maris MCS10.</title>
        <authorList>
            <consortium name="US DOE Joint Genome Institute"/>
            <person name="Copeland A."/>
            <person name="Lucas S."/>
            <person name="Lapidus A."/>
            <person name="Barry K."/>
            <person name="Detter J.C."/>
            <person name="Glavina del Rio T."/>
            <person name="Hammon N."/>
            <person name="Israni S."/>
            <person name="Dalin E."/>
            <person name="Tice H."/>
            <person name="Pitluck S."/>
            <person name="Saunders E."/>
            <person name="Brettin T."/>
            <person name="Bruce D."/>
            <person name="Han C."/>
            <person name="Tapia R."/>
            <person name="Gilna P."/>
            <person name="Schmutz J."/>
            <person name="Larimer F."/>
            <person name="Land M."/>
            <person name="Hauser L."/>
            <person name="Kyrpides N."/>
            <person name="Mikhailova N."/>
            <person name="Viollier P."/>
            <person name="Stephens C."/>
            <person name="Richardson P."/>
        </authorList>
    </citation>
    <scope>NUCLEOTIDE SEQUENCE [LARGE SCALE GENOMIC DNA]</scope>
    <source>
        <strain>MCS10</strain>
    </source>
</reference>
<organism>
    <name type="scientific">Maricaulis maris (strain MCS10)</name>
    <name type="common">Caulobacter maris</name>
    <dbReference type="NCBI Taxonomy" id="394221"/>
    <lineage>
        <taxon>Bacteria</taxon>
        <taxon>Pseudomonadati</taxon>
        <taxon>Pseudomonadota</taxon>
        <taxon>Alphaproteobacteria</taxon>
        <taxon>Maricaulales</taxon>
        <taxon>Maricaulaceae</taxon>
        <taxon>Maricaulis</taxon>
    </lineage>
</organism>
<name>LIPB_MARMM</name>
<gene>
    <name evidence="1" type="primary">lipB</name>
    <name type="ordered locus">Mmar10_1745</name>
</gene>
<sequence length="226" mass="24542">MTLPNVEWAVSPGLTPYQPALAFMEARAAAIAAGEANELVWLLEHPPLYTAGTSAKAGDLLSPDRFPVYETGRGGEYTYHGPGQRVAYVMLDLTRRGRDVRKFIQSLENWLIGAAAQFGIKAGIRDGRVGVWVDRSGGREDKIAAIGVRLRRWVSFHGIAFNVDPDLSHFGGITPCGISDPRFGVTSLADLGHTVDMADFDTALHLAWTEAFGPVRRADAPELVPD</sequence>
<proteinExistence type="inferred from homology"/>
<dbReference type="EC" id="2.3.1.181" evidence="1"/>
<dbReference type="EMBL" id="CP000449">
    <property type="protein sequence ID" value="ABI66037.1"/>
    <property type="molecule type" value="Genomic_DNA"/>
</dbReference>
<dbReference type="RefSeq" id="WP_011643683.1">
    <property type="nucleotide sequence ID" value="NC_008347.1"/>
</dbReference>
<dbReference type="SMR" id="Q0ANV0"/>
<dbReference type="STRING" id="394221.Mmar10_1745"/>
<dbReference type="KEGG" id="mmr:Mmar10_1745"/>
<dbReference type="eggNOG" id="COG0321">
    <property type="taxonomic scope" value="Bacteria"/>
</dbReference>
<dbReference type="HOGENOM" id="CLU_035168_3_0_5"/>
<dbReference type="OrthoDB" id="9787061at2"/>
<dbReference type="UniPathway" id="UPA00538">
    <property type="reaction ID" value="UER00592"/>
</dbReference>
<dbReference type="Proteomes" id="UP000001964">
    <property type="component" value="Chromosome"/>
</dbReference>
<dbReference type="GO" id="GO:0005737">
    <property type="term" value="C:cytoplasm"/>
    <property type="evidence" value="ECO:0007669"/>
    <property type="project" value="UniProtKB-SubCell"/>
</dbReference>
<dbReference type="GO" id="GO:0033819">
    <property type="term" value="F:lipoyl(octanoyl) transferase activity"/>
    <property type="evidence" value="ECO:0007669"/>
    <property type="project" value="UniProtKB-EC"/>
</dbReference>
<dbReference type="GO" id="GO:0036211">
    <property type="term" value="P:protein modification process"/>
    <property type="evidence" value="ECO:0007669"/>
    <property type="project" value="InterPro"/>
</dbReference>
<dbReference type="CDD" id="cd16444">
    <property type="entry name" value="LipB"/>
    <property type="match status" value="1"/>
</dbReference>
<dbReference type="Gene3D" id="3.30.930.10">
    <property type="entry name" value="Bira Bifunctional Protein, Domain 2"/>
    <property type="match status" value="1"/>
</dbReference>
<dbReference type="HAMAP" id="MF_00013">
    <property type="entry name" value="LipB"/>
    <property type="match status" value="1"/>
</dbReference>
<dbReference type="InterPro" id="IPR045864">
    <property type="entry name" value="aa-tRNA-synth_II/BPL/LPL"/>
</dbReference>
<dbReference type="InterPro" id="IPR004143">
    <property type="entry name" value="BPL_LPL_catalytic"/>
</dbReference>
<dbReference type="InterPro" id="IPR000544">
    <property type="entry name" value="Octanoyltransferase"/>
</dbReference>
<dbReference type="InterPro" id="IPR020605">
    <property type="entry name" value="Octanoyltransferase_CS"/>
</dbReference>
<dbReference type="NCBIfam" id="TIGR00214">
    <property type="entry name" value="lipB"/>
    <property type="match status" value="1"/>
</dbReference>
<dbReference type="NCBIfam" id="NF010921">
    <property type="entry name" value="PRK14341.1"/>
    <property type="match status" value="1"/>
</dbReference>
<dbReference type="NCBIfam" id="NF010925">
    <property type="entry name" value="PRK14345.1"/>
    <property type="match status" value="1"/>
</dbReference>
<dbReference type="PANTHER" id="PTHR10993:SF7">
    <property type="entry name" value="LIPOYLTRANSFERASE 2, MITOCHONDRIAL-RELATED"/>
    <property type="match status" value="1"/>
</dbReference>
<dbReference type="PANTHER" id="PTHR10993">
    <property type="entry name" value="OCTANOYLTRANSFERASE"/>
    <property type="match status" value="1"/>
</dbReference>
<dbReference type="Pfam" id="PF21948">
    <property type="entry name" value="LplA-B_cat"/>
    <property type="match status" value="1"/>
</dbReference>
<dbReference type="PIRSF" id="PIRSF016262">
    <property type="entry name" value="LPLase"/>
    <property type="match status" value="1"/>
</dbReference>
<dbReference type="SUPFAM" id="SSF55681">
    <property type="entry name" value="Class II aaRS and biotin synthetases"/>
    <property type="match status" value="1"/>
</dbReference>
<dbReference type="PROSITE" id="PS51733">
    <property type="entry name" value="BPL_LPL_CATALYTIC"/>
    <property type="match status" value="1"/>
</dbReference>
<dbReference type="PROSITE" id="PS01313">
    <property type="entry name" value="LIPB"/>
    <property type="match status" value="1"/>
</dbReference>